<comment type="catalytic activity">
    <reaction evidence="1">
        <text>1-(2-carboxyphenylamino)-1-deoxy-D-ribulose 5-phosphate + H(+) = (1S,2R)-1-C-(indol-3-yl)glycerol 3-phosphate + CO2 + H2O</text>
        <dbReference type="Rhea" id="RHEA:23476"/>
        <dbReference type="ChEBI" id="CHEBI:15377"/>
        <dbReference type="ChEBI" id="CHEBI:15378"/>
        <dbReference type="ChEBI" id="CHEBI:16526"/>
        <dbReference type="ChEBI" id="CHEBI:58613"/>
        <dbReference type="ChEBI" id="CHEBI:58866"/>
        <dbReference type="EC" id="4.1.1.48"/>
    </reaction>
</comment>
<comment type="pathway">
    <text evidence="1">Amino-acid biosynthesis; L-tryptophan biosynthesis; L-tryptophan from chorismate: step 4/5.</text>
</comment>
<comment type="similarity">
    <text evidence="1">Belongs to the TrpC family.</text>
</comment>
<accession>B3R703</accession>
<keyword id="KW-0028">Amino-acid biosynthesis</keyword>
<keyword id="KW-0057">Aromatic amino acid biosynthesis</keyword>
<keyword id="KW-0210">Decarboxylase</keyword>
<keyword id="KW-0456">Lyase</keyword>
<keyword id="KW-0822">Tryptophan biosynthesis</keyword>
<reference key="1">
    <citation type="journal article" date="2008" name="Genome Res.">
        <title>Genome sequence of the beta-rhizobium Cupriavidus taiwanensis and comparative genomics of rhizobia.</title>
        <authorList>
            <person name="Amadou C."/>
            <person name="Pascal G."/>
            <person name="Mangenot S."/>
            <person name="Glew M."/>
            <person name="Bontemps C."/>
            <person name="Capela D."/>
            <person name="Carrere S."/>
            <person name="Cruveiller S."/>
            <person name="Dossat C."/>
            <person name="Lajus A."/>
            <person name="Marchetti M."/>
            <person name="Poinsot V."/>
            <person name="Rouy Z."/>
            <person name="Servin B."/>
            <person name="Saad M."/>
            <person name="Schenowitz C."/>
            <person name="Barbe V."/>
            <person name="Batut J."/>
            <person name="Medigue C."/>
            <person name="Masson-Boivin C."/>
        </authorList>
    </citation>
    <scope>NUCLEOTIDE SEQUENCE [LARGE SCALE GENOMIC DNA]</scope>
    <source>
        <strain>DSM 17343 / BCRC 17206 / CCUG 44338 / CIP 107171 / LMG 19424 / R1</strain>
    </source>
</reference>
<feature type="chain" id="PRO_1000095862" description="Indole-3-glycerol phosphate synthase">
    <location>
        <begin position="1"/>
        <end position="267"/>
    </location>
</feature>
<evidence type="ECO:0000255" key="1">
    <source>
        <dbReference type="HAMAP-Rule" id="MF_00134"/>
    </source>
</evidence>
<organism>
    <name type="scientific">Cupriavidus taiwanensis (strain DSM 17343 / BCRC 17206 / CCUG 44338 / CIP 107171 / LMG 19424 / R1)</name>
    <name type="common">Ralstonia taiwanensis (strain LMG 19424)</name>
    <dbReference type="NCBI Taxonomy" id="977880"/>
    <lineage>
        <taxon>Bacteria</taxon>
        <taxon>Pseudomonadati</taxon>
        <taxon>Pseudomonadota</taxon>
        <taxon>Betaproteobacteria</taxon>
        <taxon>Burkholderiales</taxon>
        <taxon>Burkholderiaceae</taxon>
        <taxon>Cupriavidus</taxon>
    </lineage>
</organism>
<proteinExistence type="inferred from homology"/>
<sequence>MSDILQKILAVKADEVAAARKRRDLPSLRAEAESLRSEAGLAPRGFERALRDKIAAGHAAVIAEIKKASPSKGVLREQFLPEAIAESYATHGAACLSVLTDEHFFQGHADYLKRARGACPLPALRKDFMVDLYQVYEARTWGADCILLIVAALDHGLMAELEACALELGMDVLVEVHGDDELEAALRLKTPLLGVNNRNLRTFEVSLDNTLDLLPHIPADKLVVTESGILAPADVKRMRDANVHAFLVGEAFMRAKEPGVELARLFG</sequence>
<dbReference type="EC" id="4.1.1.48" evidence="1"/>
<dbReference type="EMBL" id="CU633749">
    <property type="protein sequence ID" value="CAQ70703.1"/>
    <property type="molecule type" value="Genomic_DNA"/>
</dbReference>
<dbReference type="RefSeq" id="WP_012353997.1">
    <property type="nucleotide sequence ID" value="NC_010528.1"/>
</dbReference>
<dbReference type="SMR" id="B3R703"/>
<dbReference type="GeneID" id="29761915"/>
<dbReference type="KEGG" id="cti:RALTA_A2775"/>
<dbReference type="eggNOG" id="COG0134">
    <property type="taxonomic scope" value="Bacteria"/>
</dbReference>
<dbReference type="HOGENOM" id="CLU_034247_2_0_4"/>
<dbReference type="BioCyc" id="CTAI977880:RALTA_RS13520-MONOMER"/>
<dbReference type="UniPathway" id="UPA00035">
    <property type="reaction ID" value="UER00043"/>
</dbReference>
<dbReference type="Proteomes" id="UP000001692">
    <property type="component" value="Chromosome 1"/>
</dbReference>
<dbReference type="GO" id="GO:0004425">
    <property type="term" value="F:indole-3-glycerol-phosphate synthase activity"/>
    <property type="evidence" value="ECO:0007669"/>
    <property type="project" value="UniProtKB-UniRule"/>
</dbReference>
<dbReference type="GO" id="GO:0004640">
    <property type="term" value="F:phosphoribosylanthranilate isomerase activity"/>
    <property type="evidence" value="ECO:0007669"/>
    <property type="project" value="TreeGrafter"/>
</dbReference>
<dbReference type="GO" id="GO:0000162">
    <property type="term" value="P:L-tryptophan biosynthetic process"/>
    <property type="evidence" value="ECO:0007669"/>
    <property type="project" value="UniProtKB-UniRule"/>
</dbReference>
<dbReference type="CDD" id="cd00331">
    <property type="entry name" value="IGPS"/>
    <property type="match status" value="1"/>
</dbReference>
<dbReference type="FunFam" id="3.20.20.70:FF:000024">
    <property type="entry name" value="Indole-3-glycerol phosphate synthase"/>
    <property type="match status" value="1"/>
</dbReference>
<dbReference type="Gene3D" id="3.20.20.70">
    <property type="entry name" value="Aldolase class I"/>
    <property type="match status" value="1"/>
</dbReference>
<dbReference type="HAMAP" id="MF_00134_B">
    <property type="entry name" value="IGPS_B"/>
    <property type="match status" value="1"/>
</dbReference>
<dbReference type="InterPro" id="IPR013785">
    <property type="entry name" value="Aldolase_TIM"/>
</dbReference>
<dbReference type="InterPro" id="IPR045186">
    <property type="entry name" value="Indole-3-glycerol_P_synth"/>
</dbReference>
<dbReference type="InterPro" id="IPR013798">
    <property type="entry name" value="Indole-3-glycerol_P_synth_dom"/>
</dbReference>
<dbReference type="InterPro" id="IPR001468">
    <property type="entry name" value="Indole-3-GlycerolPSynthase_CS"/>
</dbReference>
<dbReference type="InterPro" id="IPR011060">
    <property type="entry name" value="RibuloseP-bd_barrel"/>
</dbReference>
<dbReference type="NCBIfam" id="NF001370">
    <property type="entry name" value="PRK00278.1-2"/>
    <property type="match status" value="1"/>
</dbReference>
<dbReference type="NCBIfam" id="NF001373">
    <property type="entry name" value="PRK00278.1-6"/>
    <property type="match status" value="1"/>
</dbReference>
<dbReference type="NCBIfam" id="NF001377">
    <property type="entry name" value="PRK00278.2-4"/>
    <property type="match status" value="1"/>
</dbReference>
<dbReference type="PANTHER" id="PTHR22854:SF2">
    <property type="entry name" value="INDOLE-3-GLYCEROL-PHOSPHATE SYNTHASE"/>
    <property type="match status" value="1"/>
</dbReference>
<dbReference type="PANTHER" id="PTHR22854">
    <property type="entry name" value="TRYPTOPHAN BIOSYNTHESIS PROTEIN"/>
    <property type="match status" value="1"/>
</dbReference>
<dbReference type="Pfam" id="PF00218">
    <property type="entry name" value="IGPS"/>
    <property type="match status" value="1"/>
</dbReference>
<dbReference type="SUPFAM" id="SSF51366">
    <property type="entry name" value="Ribulose-phoshate binding barrel"/>
    <property type="match status" value="1"/>
</dbReference>
<dbReference type="PROSITE" id="PS00614">
    <property type="entry name" value="IGPS"/>
    <property type="match status" value="1"/>
</dbReference>
<name>TRPC_CUPTR</name>
<protein>
    <recommendedName>
        <fullName evidence="1">Indole-3-glycerol phosphate synthase</fullName>
        <shortName evidence="1">IGPS</shortName>
        <ecNumber evidence="1">4.1.1.48</ecNumber>
    </recommendedName>
</protein>
<gene>
    <name evidence="1" type="primary">trpC</name>
    <name type="ordered locus">RALTA_A2775</name>
</gene>